<feature type="chain" id="PRO_0000148992" description="Probable metalloprotease ARX1">
    <location>
        <begin position="1"/>
        <end position="591"/>
    </location>
</feature>
<accession>Q74ZU6</accession>
<sequence length="591" mass="64096">MALAISSEDTQVLLKDKNVLHESNVDKYRTAGQITQTALRFLAGLINDSYHHRTRATPLSVAELCMLTDSFVERCVRQAFANKANERGIAHPTTIDVDEITQGWAPETDDAANMERWNRDRQANSGSCQGARSAISGFLHEGDVVKLTVGCHIDGYTAQVSHTMVVYPTTRREADQALVPAGPLLGAKADAVAAATIAKESVTSLLACAQATEKLPAAFGERQVTGTLIRRVVDAVARSYNCAVVPGSRVRRVRRFLAGQNEGVVAERDIKGVHWTEAHQEAALLASSVETTDVTRVDASNKSANDSAVATDDFVVVSGEAYLIDLKIAPLKDLPRGLLTLQTVDHFSGKSHRKDELLARASLICRDFAKQHVLKLKSSRQLLHKLDSKGVYPTKLAHLTAAFPLDPESPDWDAVSKELKHLRLGLAEVTNNYLANEKPVQLCRLVPWDVILKAVNPTGKHGTDASNPTLPGYEIPLPQLGISSLRLKSLLKDSLPVPVARESITVLLCPAEVTSTGSPELLKLTGGPTTTPSWIHSDYELNVSDPVVQGILQLAELSKDKRFGLAIRETQPWKQKIPSAAAVTSADVEMA</sequence>
<protein>
    <recommendedName>
        <fullName>Probable metalloprotease ARX1</fullName>
        <ecNumber>3.-.-.-</ecNumber>
    </recommendedName>
    <alternativeName>
        <fullName>Associated with ribosomal export complex protein 1</fullName>
    </alternativeName>
</protein>
<organism>
    <name type="scientific">Eremothecium gossypii (strain ATCC 10895 / CBS 109.51 / FGSC 9923 / NRRL Y-1056)</name>
    <name type="common">Yeast</name>
    <name type="synonym">Ashbya gossypii</name>
    <dbReference type="NCBI Taxonomy" id="284811"/>
    <lineage>
        <taxon>Eukaryota</taxon>
        <taxon>Fungi</taxon>
        <taxon>Dikarya</taxon>
        <taxon>Ascomycota</taxon>
        <taxon>Saccharomycotina</taxon>
        <taxon>Saccharomycetes</taxon>
        <taxon>Saccharomycetales</taxon>
        <taxon>Saccharomycetaceae</taxon>
        <taxon>Eremothecium</taxon>
    </lineage>
</organism>
<proteinExistence type="inferred from homology"/>
<evidence type="ECO:0000250" key="1"/>
<evidence type="ECO:0000305" key="2"/>
<reference key="1">
    <citation type="journal article" date="2004" name="Science">
        <title>The Ashbya gossypii genome as a tool for mapping the ancient Saccharomyces cerevisiae genome.</title>
        <authorList>
            <person name="Dietrich F.S."/>
            <person name="Voegeli S."/>
            <person name="Brachat S."/>
            <person name="Lerch A."/>
            <person name="Gates K."/>
            <person name="Steiner S."/>
            <person name="Mohr C."/>
            <person name="Poehlmann R."/>
            <person name="Luedi P."/>
            <person name="Choi S."/>
            <person name="Wing R.A."/>
            <person name="Flavier A."/>
            <person name="Gaffney T.D."/>
            <person name="Philippsen P."/>
        </authorList>
    </citation>
    <scope>NUCLEOTIDE SEQUENCE [LARGE SCALE GENOMIC DNA]</scope>
    <source>
        <strain>ATCC 10895 / CBS 109.51 / FGSC 9923 / NRRL Y-1056</strain>
    </source>
</reference>
<reference key="2">
    <citation type="journal article" date="2013" name="G3 (Bethesda)">
        <title>Genomes of Ashbya fungi isolated from insects reveal four mating-type loci, numerous translocations, lack of transposons, and distinct gene duplications.</title>
        <authorList>
            <person name="Dietrich F.S."/>
            <person name="Voegeli S."/>
            <person name="Kuo S."/>
            <person name="Philippsen P."/>
        </authorList>
    </citation>
    <scope>GENOME REANNOTATION</scope>
    <source>
        <strain>ATCC 10895 / CBS 109.51 / FGSC 9923 / NRRL Y-1056</strain>
    </source>
</reference>
<gene>
    <name type="primary">ARX1</name>
    <name type="ordered locus">AGR102C</name>
</gene>
<name>ARX1_EREGS</name>
<keyword id="KW-0963">Cytoplasm</keyword>
<keyword id="KW-0378">Hydrolase</keyword>
<keyword id="KW-0479">Metal-binding</keyword>
<keyword id="KW-0482">Metalloprotease</keyword>
<keyword id="KW-0539">Nucleus</keyword>
<keyword id="KW-0645">Protease</keyword>
<keyword id="KW-1185">Reference proteome</keyword>
<dbReference type="EC" id="3.-.-.-"/>
<dbReference type="EMBL" id="AE016820">
    <property type="protein sequence ID" value="AAS54592.1"/>
    <property type="molecule type" value="Genomic_DNA"/>
</dbReference>
<dbReference type="RefSeq" id="NP_986768.1">
    <property type="nucleotide sequence ID" value="NM_211830.1"/>
</dbReference>
<dbReference type="SMR" id="Q74ZU6"/>
<dbReference type="FunCoup" id="Q74ZU6">
    <property type="interactions" value="418"/>
</dbReference>
<dbReference type="STRING" id="284811.Q74ZU6"/>
<dbReference type="EnsemblFungi" id="AAS54592">
    <property type="protein sequence ID" value="AAS54592"/>
    <property type="gene ID" value="AGOS_AGR102C"/>
</dbReference>
<dbReference type="GeneID" id="4623070"/>
<dbReference type="KEGG" id="ago:AGOS_AGR102C"/>
<dbReference type="eggNOG" id="KOG2776">
    <property type="taxonomic scope" value="Eukaryota"/>
</dbReference>
<dbReference type="HOGENOM" id="CLU_477525_0_0_1"/>
<dbReference type="InParanoid" id="Q74ZU6"/>
<dbReference type="OMA" id="KPSWVHS"/>
<dbReference type="OrthoDB" id="5876363at2759"/>
<dbReference type="Proteomes" id="UP000000591">
    <property type="component" value="Chromosome VII"/>
</dbReference>
<dbReference type="GO" id="GO:0005737">
    <property type="term" value="C:cytoplasm"/>
    <property type="evidence" value="ECO:0007669"/>
    <property type="project" value="UniProtKB-SubCell"/>
</dbReference>
<dbReference type="GO" id="GO:0005730">
    <property type="term" value="C:nucleolus"/>
    <property type="evidence" value="ECO:0007669"/>
    <property type="project" value="EnsemblFungi"/>
</dbReference>
<dbReference type="GO" id="GO:0005654">
    <property type="term" value="C:nucleoplasm"/>
    <property type="evidence" value="ECO:0007669"/>
    <property type="project" value="EnsemblFungi"/>
</dbReference>
<dbReference type="GO" id="GO:0030687">
    <property type="term" value="C:preribosome, large subunit precursor"/>
    <property type="evidence" value="ECO:0007669"/>
    <property type="project" value="EnsemblFungi"/>
</dbReference>
<dbReference type="GO" id="GO:0046872">
    <property type="term" value="F:metal ion binding"/>
    <property type="evidence" value="ECO:0007669"/>
    <property type="project" value="UniProtKB-KW"/>
</dbReference>
<dbReference type="GO" id="GO:0008237">
    <property type="term" value="F:metallopeptidase activity"/>
    <property type="evidence" value="ECO:0007669"/>
    <property type="project" value="UniProtKB-KW"/>
</dbReference>
<dbReference type="GO" id="GO:0006508">
    <property type="term" value="P:proteolysis"/>
    <property type="evidence" value="ECO:0007669"/>
    <property type="project" value="UniProtKB-KW"/>
</dbReference>
<dbReference type="GO" id="GO:0000055">
    <property type="term" value="P:ribosomal large subunit export from nucleus"/>
    <property type="evidence" value="ECO:0007669"/>
    <property type="project" value="EnsemblFungi"/>
</dbReference>
<dbReference type="Gene3D" id="3.90.230.10">
    <property type="entry name" value="Creatinase/methionine aminopeptidase superfamily"/>
    <property type="match status" value="1"/>
</dbReference>
<dbReference type="Gene3D" id="1.10.10.10">
    <property type="entry name" value="Winged helix-like DNA-binding domain superfamily/Winged helix DNA-binding domain"/>
    <property type="match status" value="1"/>
</dbReference>
<dbReference type="InterPro" id="IPR036005">
    <property type="entry name" value="Creatinase/aminopeptidase-like"/>
</dbReference>
<dbReference type="InterPro" id="IPR047113">
    <property type="entry name" value="PA2G4/ARX1"/>
</dbReference>
<dbReference type="InterPro" id="IPR036388">
    <property type="entry name" value="WH-like_DNA-bd_sf"/>
</dbReference>
<dbReference type="PANTHER" id="PTHR10804:SF102">
    <property type="entry name" value="METALLOPROTEASE ARX1-RELATED"/>
    <property type="match status" value="1"/>
</dbReference>
<dbReference type="PANTHER" id="PTHR10804">
    <property type="entry name" value="PROTEASE FAMILY M24 METHIONYL AMINOPEPTIDASE, AMINOPEPTIDASE P"/>
    <property type="match status" value="1"/>
</dbReference>
<dbReference type="SUPFAM" id="SSF55920">
    <property type="entry name" value="Creatinase/aminopeptidase"/>
    <property type="match status" value="1"/>
</dbReference>
<comment type="function">
    <text evidence="1">Probable metalloprotease involved in proper assembly of pre-ribosomal particles during the biogenesis of the 60S ribosomal subunit. Accompanies the pre-60S particles to the cytoplasm (By similarity).</text>
</comment>
<comment type="subunit">
    <text evidence="1">Component of the nucleoplasmic and cytoplasmic pre-60S ribosomal particles.</text>
</comment>
<comment type="subcellular location">
    <subcellularLocation>
        <location evidence="1">Cytoplasm</location>
    </subcellularLocation>
    <subcellularLocation>
        <location evidence="1">Nucleus</location>
    </subcellularLocation>
</comment>
<comment type="similarity">
    <text evidence="2">Belongs to the peptidase M24 family.</text>
</comment>